<dbReference type="EC" id="2.5.1.145" evidence="1"/>
<dbReference type="EMBL" id="BX908798">
    <property type="protein sequence ID" value="CAF23807.1"/>
    <property type="molecule type" value="Genomic_DNA"/>
</dbReference>
<dbReference type="RefSeq" id="WP_011175633.1">
    <property type="nucleotide sequence ID" value="NC_005861.2"/>
</dbReference>
<dbReference type="STRING" id="264201.pc1083"/>
<dbReference type="eggNOG" id="COG0682">
    <property type="taxonomic scope" value="Bacteria"/>
</dbReference>
<dbReference type="HOGENOM" id="CLU_013386_1_0_0"/>
<dbReference type="UniPathway" id="UPA00664"/>
<dbReference type="Proteomes" id="UP000000529">
    <property type="component" value="Chromosome"/>
</dbReference>
<dbReference type="GO" id="GO:0005886">
    <property type="term" value="C:plasma membrane"/>
    <property type="evidence" value="ECO:0007669"/>
    <property type="project" value="UniProtKB-SubCell"/>
</dbReference>
<dbReference type="GO" id="GO:0008961">
    <property type="term" value="F:phosphatidylglycerol-prolipoprotein diacylglyceryl transferase activity"/>
    <property type="evidence" value="ECO:0007669"/>
    <property type="project" value="UniProtKB-UniRule"/>
</dbReference>
<dbReference type="GO" id="GO:0042158">
    <property type="term" value="P:lipoprotein biosynthetic process"/>
    <property type="evidence" value="ECO:0007669"/>
    <property type="project" value="UniProtKB-UniRule"/>
</dbReference>
<dbReference type="HAMAP" id="MF_01147">
    <property type="entry name" value="Lgt"/>
    <property type="match status" value="1"/>
</dbReference>
<dbReference type="InterPro" id="IPR001640">
    <property type="entry name" value="Lgt"/>
</dbReference>
<dbReference type="PANTHER" id="PTHR30589:SF0">
    <property type="entry name" value="PHOSPHATIDYLGLYCEROL--PROLIPOPROTEIN DIACYLGLYCERYL TRANSFERASE"/>
    <property type="match status" value="1"/>
</dbReference>
<dbReference type="PANTHER" id="PTHR30589">
    <property type="entry name" value="PROLIPOPROTEIN DIACYLGLYCERYL TRANSFERASE"/>
    <property type="match status" value="1"/>
</dbReference>
<dbReference type="Pfam" id="PF01790">
    <property type="entry name" value="LGT"/>
    <property type="match status" value="1"/>
</dbReference>
<dbReference type="PROSITE" id="PS01311">
    <property type="entry name" value="LGT"/>
    <property type="match status" value="1"/>
</dbReference>
<keyword id="KW-0997">Cell inner membrane</keyword>
<keyword id="KW-1003">Cell membrane</keyword>
<keyword id="KW-0472">Membrane</keyword>
<keyword id="KW-1185">Reference proteome</keyword>
<keyword id="KW-0808">Transferase</keyword>
<keyword id="KW-0812">Transmembrane</keyword>
<keyword id="KW-1133">Transmembrane helix</keyword>
<protein>
    <recommendedName>
        <fullName evidence="1">Phosphatidylglycerol--prolipoprotein diacylglyceryl transferase</fullName>
        <ecNumber evidence="1">2.5.1.145</ecNumber>
    </recommendedName>
</protein>
<comment type="function">
    <text evidence="1">Catalyzes the transfer of the diacylglyceryl group from phosphatidylglycerol to the sulfhydryl group of the N-terminal cysteine of a prolipoprotein, the first step in the formation of mature lipoproteins.</text>
</comment>
<comment type="catalytic activity">
    <reaction evidence="1">
        <text>L-cysteinyl-[prolipoprotein] + a 1,2-diacyl-sn-glycero-3-phospho-(1'-sn-glycerol) = an S-1,2-diacyl-sn-glyceryl-L-cysteinyl-[prolipoprotein] + sn-glycerol 1-phosphate + H(+)</text>
        <dbReference type="Rhea" id="RHEA:56712"/>
        <dbReference type="Rhea" id="RHEA-COMP:14679"/>
        <dbReference type="Rhea" id="RHEA-COMP:14680"/>
        <dbReference type="ChEBI" id="CHEBI:15378"/>
        <dbReference type="ChEBI" id="CHEBI:29950"/>
        <dbReference type="ChEBI" id="CHEBI:57685"/>
        <dbReference type="ChEBI" id="CHEBI:64716"/>
        <dbReference type="ChEBI" id="CHEBI:140658"/>
        <dbReference type="EC" id="2.5.1.145"/>
    </reaction>
</comment>
<comment type="pathway">
    <text evidence="1">Protein modification; lipoprotein biosynthesis (diacylglyceryl transfer).</text>
</comment>
<comment type="subcellular location">
    <subcellularLocation>
        <location evidence="1">Cell inner membrane</location>
        <topology evidence="1">Multi-pass membrane protein</topology>
    </subcellularLocation>
</comment>
<comment type="similarity">
    <text evidence="1">Belongs to the Lgt family.</text>
</comment>
<accession>Q6MC92</accession>
<sequence length="374" mass="43143">MLTEHWLAWLYWNPPREAFTLPFIDHPVMWYGICFITGFILGYFIIVPIIALFVNQSKHLSSMDIQDWRSLVNQLKTSSSPLIQKCQNALNRQERQKLNSEIQPLNISSDLKNALLIKLNTILKENSIQRKDLEQAFQGAITSAKQISYFLADRLCWFIVFGTLIGARLGAVFFYDWNYFKSHPLEIFEVWKGGLASHGGALGVMLALFFYTSYIKKWTPTLSFLRVLDFVAIPSALTAVFIRIGNFFNQEIIGTPSAYPWAVLFAQPADGSLPIPRHPVQLYEAFAYLMTFFLLFTLWKKCNTCLAAGTYAGFLFIFNFSSRFLLEFWKANLDSILTNPILQMGQLLSIPFILFGICLVWRKQNWQNLFCCHR</sequence>
<feature type="chain" id="PRO_0000172645" description="Phosphatidylglycerol--prolipoprotein diacylglyceryl transferase">
    <location>
        <begin position="1"/>
        <end position="374"/>
    </location>
</feature>
<feature type="transmembrane region" description="Helical" evidence="1">
    <location>
        <begin position="33"/>
        <end position="53"/>
    </location>
</feature>
<feature type="transmembrane region" description="Helical" evidence="1">
    <location>
        <begin position="155"/>
        <end position="175"/>
    </location>
</feature>
<feature type="transmembrane region" description="Helical" evidence="1">
    <location>
        <begin position="195"/>
        <end position="215"/>
    </location>
</feature>
<feature type="transmembrane region" description="Helical" evidence="1">
    <location>
        <begin position="222"/>
        <end position="242"/>
    </location>
</feature>
<feature type="transmembrane region" description="Helical" evidence="1">
    <location>
        <begin position="279"/>
        <end position="299"/>
    </location>
</feature>
<feature type="transmembrane region" description="Helical" evidence="1">
    <location>
        <begin position="306"/>
        <end position="326"/>
    </location>
</feature>
<feature type="transmembrane region" description="Helical" evidence="1">
    <location>
        <begin position="341"/>
        <end position="361"/>
    </location>
</feature>
<feature type="binding site" evidence="1">
    <location>
        <position position="243"/>
    </location>
    <ligand>
        <name>a 1,2-diacyl-sn-glycero-3-phospho-(1'-sn-glycerol)</name>
        <dbReference type="ChEBI" id="CHEBI:64716"/>
    </ligand>
</feature>
<evidence type="ECO:0000255" key="1">
    <source>
        <dbReference type="HAMAP-Rule" id="MF_01147"/>
    </source>
</evidence>
<name>LGT_PARUW</name>
<gene>
    <name evidence="1" type="primary">lgt</name>
    <name type="ordered locus">pc1083</name>
</gene>
<organism>
    <name type="scientific">Protochlamydia amoebophila (strain UWE25)</name>
    <dbReference type="NCBI Taxonomy" id="264201"/>
    <lineage>
        <taxon>Bacteria</taxon>
        <taxon>Pseudomonadati</taxon>
        <taxon>Chlamydiota</taxon>
        <taxon>Chlamydiia</taxon>
        <taxon>Parachlamydiales</taxon>
        <taxon>Parachlamydiaceae</taxon>
        <taxon>Candidatus Protochlamydia</taxon>
    </lineage>
</organism>
<proteinExistence type="inferred from homology"/>
<reference key="1">
    <citation type="journal article" date="2004" name="Science">
        <title>Illuminating the evolutionary history of chlamydiae.</title>
        <authorList>
            <person name="Horn M."/>
            <person name="Collingro A."/>
            <person name="Schmitz-Esser S."/>
            <person name="Beier C.L."/>
            <person name="Purkhold U."/>
            <person name="Fartmann B."/>
            <person name="Brandt P."/>
            <person name="Nyakatura G.J."/>
            <person name="Droege M."/>
            <person name="Frishman D."/>
            <person name="Rattei T."/>
            <person name="Mewes H.-W."/>
            <person name="Wagner M."/>
        </authorList>
    </citation>
    <scope>NUCLEOTIDE SEQUENCE [LARGE SCALE GENOMIC DNA]</scope>
    <source>
        <strain>UWE25</strain>
    </source>
</reference>